<name>PCSK7_HUMAN</name>
<evidence type="ECO:0000250" key="1"/>
<evidence type="ECO:0000255" key="2"/>
<evidence type="ECO:0000255" key="3">
    <source>
        <dbReference type="PROSITE-ProRule" id="PRU01173"/>
    </source>
</evidence>
<evidence type="ECO:0000255" key="4">
    <source>
        <dbReference type="PROSITE-ProRule" id="PRU01240"/>
    </source>
</evidence>
<evidence type="ECO:0000256" key="5">
    <source>
        <dbReference type="SAM" id="MobiDB-lite"/>
    </source>
</evidence>
<evidence type="ECO:0000269" key="6">
    <source>
    </source>
</evidence>
<evidence type="ECO:0000305" key="7"/>
<feature type="signal peptide" evidence="1">
    <location>
        <begin position="1"/>
        <end position="37"/>
    </location>
</feature>
<feature type="propeptide" id="PRO_0000027114" evidence="1">
    <location>
        <begin position="38"/>
        <end position="141"/>
    </location>
</feature>
<feature type="chain" id="PRO_0000027115" description="Proprotein convertase subtilisin/kexin type 7">
    <location>
        <begin position="142"/>
        <end position="785"/>
    </location>
</feature>
<feature type="topological domain" description="Extracellular" evidence="2">
    <location>
        <begin position="142"/>
        <end position="667"/>
    </location>
</feature>
<feature type="transmembrane region" description="Helical" evidence="2">
    <location>
        <begin position="668"/>
        <end position="688"/>
    </location>
</feature>
<feature type="topological domain" description="Cytoplasmic" evidence="2">
    <location>
        <begin position="689"/>
        <end position="785"/>
    </location>
</feature>
<feature type="domain" description="Peptidase S8" evidence="4">
    <location>
        <begin position="153"/>
        <end position="473"/>
    </location>
</feature>
<feature type="domain" description="P/Homo B" evidence="3">
    <location>
        <begin position="481"/>
        <end position="618"/>
    </location>
</feature>
<feature type="region of interest" description="Disordered" evidence="5">
    <location>
        <begin position="197"/>
        <end position="219"/>
    </location>
</feature>
<feature type="region of interest" description="Disordered" evidence="5">
    <location>
        <begin position="700"/>
        <end position="751"/>
    </location>
</feature>
<feature type="active site" description="Charge relay system" evidence="4">
    <location>
        <position position="187"/>
    </location>
</feature>
<feature type="active site" description="Charge relay system" evidence="4">
    <location>
        <position position="228"/>
    </location>
</feature>
<feature type="active site" description="Charge relay system" evidence="4">
    <location>
        <position position="406"/>
    </location>
</feature>
<feature type="site" description="Cleavage; by autolysis" evidence="1">
    <location>
        <begin position="141"/>
        <end position="142"/>
    </location>
</feature>
<feature type="glycosylation site" description="N-linked (GlcNAc...) asparagine" evidence="2">
    <location>
        <position position="167"/>
    </location>
</feature>
<feature type="glycosylation site" description="N-linked (GlcNAc...) asparagine" evidence="2">
    <location>
        <position position="175"/>
    </location>
</feature>
<feature type="glycosylation site" description="N-linked (GlcNAc...) asparagine" evidence="2">
    <location>
        <position position="241"/>
    </location>
</feature>
<feature type="glycosylation site" description="N-linked (GlcNAc...) asparagine" evidence="2">
    <location>
        <position position="511"/>
    </location>
</feature>
<feature type="sequence variant" id="VAR_044419" description="In dbSNP:rs608620.">
    <original>L</original>
    <variation>V</variation>
    <location>
        <position position="688"/>
    </location>
</feature>
<feature type="sequence variant" id="VAR_044420" description="In dbSNP:rs45539233.">
    <original>S</original>
    <variation>N</variation>
    <location>
        <position position="689"/>
    </location>
</feature>
<feature type="sequence variant" id="VAR_044421" description="In dbSNP:rs45574931.">
    <original>R</original>
    <variation>M</variation>
    <location>
        <position position="700"/>
    </location>
</feature>
<feature type="sequence variant" id="VAR_044422" description="In dbSNP:rs473131.">
    <original>H</original>
    <variation>Y</variation>
    <location>
        <position position="708"/>
    </location>
</feature>
<feature type="sequence variant" id="VAR_044423" description="In dbSNP:rs473093.">
    <original>R</original>
    <variation>Q</variation>
    <location>
        <position position="711"/>
    </location>
</feature>
<feature type="sequence conflict" description="In Ref. 1; AAC50417 and 3; AAB03087." evidence="7" ref="1 3">
    <original>P</original>
    <variation>A</variation>
    <location>
        <position position="52"/>
    </location>
</feature>
<feature type="sequence conflict" description="In Ref. 1; AAC50417 and 3; AAB03087." evidence="7" ref="1 3">
    <original>A</original>
    <variation>P</variation>
    <location>
        <position position="112"/>
    </location>
</feature>
<feature type="sequence conflict" description="In Ref. 6; BAD96627." evidence="7" ref="6">
    <original>H</original>
    <variation>R</variation>
    <location>
        <position position="228"/>
    </location>
</feature>
<feature type="sequence conflict" description="In Ref. 7; ACA06037." evidence="7" ref="7">
    <original>A</original>
    <variation>T</variation>
    <location>
        <position position="353"/>
    </location>
</feature>
<comment type="function">
    <text>Serine endoprotease that processes various proproteins by cleavage at paired basic amino acids, recognizing the RXXX[KR]R consensus motif. Likely functions in the constitutive secretory pathway.</text>
</comment>
<comment type="cofactor">
    <cofactor evidence="1">
        <name>Ca(2+)</name>
        <dbReference type="ChEBI" id="CHEBI:29108"/>
    </cofactor>
</comment>
<comment type="activity regulation">
    <text evidence="1">Inhibited by zinc and copper.</text>
</comment>
<comment type="interaction">
    <interactant intactId="EBI-8059854">
        <id>Q16549</id>
    </interactant>
    <interactant intactId="EBI-744302">
        <id>P14136</id>
        <label>GFAP</label>
    </interactant>
    <organismsDiffer>false</organismsDiffer>
    <experiments>3</experiments>
</comment>
<comment type="interaction">
    <interactant intactId="EBI-8059854">
        <id>Q16549</id>
    </interactant>
    <interactant intactId="EBI-1055254">
        <id>Q8WXH2</id>
        <label>JPH3</label>
    </interactant>
    <organismsDiffer>false</organismsDiffer>
    <experiments>3</experiments>
</comment>
<comment type="interaction">
    <interactant intactId="EBI-8059854">
        <id>Q16549</id>
    </interactant>
    <interactant intactId="EBI-2432309">
        <id>Q92876</id>
        <label>KLK6</label>
    </interactant>
    <organismsDiffer>false</organismsDiffer>
    <experiments>3</experiments>
</comment>
<comment type="interaction">
    <interactant intactId="EBI-8059854">
        <id>Q16549</id>
    </interactant>
    <interactant intactId="EBI-713665">
        <id>P19404</id>
        <label>NDUFV2</label>
    </interactant>
    <organismsDiffer>false</organismsDiffer>
    <experiments>3</experiments>
</comment>
<comment type="interaction">
    <interactant intactId="EBI-8059854">
        <id>Q16549</id>
    </interactant>
    <interactant intactId="EBI-1391623">
        <id>P29474</id>
        <label>NOS3</label>
    </interactant>
    <organismsDiffer>false</organismsDiffer>
    <experiments>3</experiments>
</comment>
<comment type="interaction">
    <interactant intactId="EBI-8059854">
        <id>Q16549</id>
    </interactant>
    <interactant intactId="EBI-716404">
        <id>P16284</id>
        <label>PECAM1</label>
    </interactant>
    <organismsDiffer>false</organismsDiffer>
    <experiments>3</experiments>
</comment>
<comment type="interaction">
    <interactant intactId="EBI-8059854">
        <id>Q16549</id>
    </interactant>
    <interactant intactId="EBI-476586">
        <id>P17612</id>
        <label>PRKACA</label>
    </interactant>
    <organismsDiffer>false</organismsDiffer>
    <experiments>3</experiments>
</comment>
<comment type="interaction">
    <interactant intactId="EBI-8059854">
        <id>Q16549</id>
    </interactant>
    <interactant intactId="EBI-350723">
        <id>P50454</id>
        <label>SERPINH1</label>
    </interactant>
    <organismsDiffer>false</organismsDiffer>
    <experiments>3</experiments>
</comment>
<comment type="interaction">
    <interactant intactId="EBI-8059854">
        <id>Q16549</id>
    </interactant>
    <interactant intactId="EBI-296151">
        <id>P37173</id>
        <label>TGFBR2</label>
    </interactant>
    <organismsDiffer>false</organismsDiffer>
    <experiments>3</experiments>
</comment>
<comment type="subcellular location">
    <subcellularLocation>
        <location evidence="1">Golgi apparatus</location>
        <location evidence="1">trans-Golgi network membrane</location>
        <topology evidence="1">Single-pass type I membrane protein</topology>
    </subcellularLocation>
    <text evidence="1">Seems to be localized intracellularly to the trans Golgi network.</text>
</comment>
<comment type="tissue specificity">
    <text>Expressed in spleen, thymus, prostate, testis, ovary, small intestine, colon and peripheral blood leukocyte.</text>
</comment>
<comment type="PTM">
    <text evidence="6">Cysteine residues in the cytoplasmic tail are probably palmitoylated.</text>
</comment>
<comment type="PTM">
    <text evidence="6">N-glycosylated.</text>
</comment>
<comment type="similarity">
    <text evidence="7">Belongs to the peptidase S8 family.</text>
</comment>
<protein>
    <recommendedName>
        <fullName>Proprotein convertase subtilisin/kexin type 7</fullName>
        <ecNumber>3.4.21.-</ecNumber>
    </recommendedName>
    <alternativeName>
        <fullName>Lymphoma proprotein convertase</fullName>
    </alternativeName>
    <alternativeName>
        <fullName>Prohormone convertase 7</fullName>
    </alternativeName>
    <alternativeName>
        <fullName>Proprotein convertase 7</fullName>
        <shortName>PC7</shortName>
    </alternativeName>
    <alternativeName>
        <fullName>Proprotein convertase 8</fullName>
        <shortName>PC8</shortName>
        <shortName>hPC8</shortName>
    </alternativeName>
    <alternativeName>
        <fullName>Subtilisin/kexin-like protease PC7</fullName>
    </alternativeName>
</protein>
<dbReference type="EC" id="3.4.21.-"/>
<dbReference type="EMBL" id="U40623">
    <property type="protein sequence ID" value="AAC50417.1"/>
    <property type="molecule type" value="mRNA"/>
</dbReference>
<dbReference type="EMBL" id="U33849">
    <property type="protein sequence ID" value="AAB03087.1"/>
    <property type="molecule type" value="mRNA"/>
</dbReference>
<dbReference type="EMBL" id="BT006870">
    <property type="protein sequence ID" value="AAP35516.1"/>
    <property type="molecule type" value="mRNA"/>
</dbReference>
<dbReference type="EMBL" id="AK312429">
    <property type="protein sequence ID" value="BAG35338.1"/>
    <property type="molecule type" value="mRNA"/>
</dbReference>
<dbReference type="EMBL" id="AK222907">
    <property type="protein sequence ID" value="BAD96627.1"/>
    <property type="molecule type" value="mRNA"/>
</dbReference>
<dbReference type="EMBL" id="EF445005">
    <property type="protein sequence ID" value="ACA06036.1"/>
    <property type="molecule type" value="Genomic_DNA"/>
</dbReference>
<dbReference type="EMBL" id="EF445005">
    <property type="protein sequence ID" value="ACA06037.1"/>
    <property type="molecule type" value="Genomic_DNA"/>
</dbReference>
<dbReference type="EMBL" id="CH471065">
    <property type="protein sequence ID" value="EAW67305.1"/>
    <property type="molecule type" value="Genomic_DNA"/>
</dbReference>
<dbReference type="EMBL" id="BC010696">
    <property type="protein sequence ID" value="AAH10696.1"/>
    <property type="molecule type" value="mRNA"/>
</dbReference>
<dbReference type="EMBL" id="AF057710">
    <property type="protein sequence ID" value="AAD55137.1"/>
    <property type="molecule type" value="Genomic_DNA"/>
</dbReference>
<dbReference type="EMBL" id="AB231710">
    <property type="protein sequence ID" value="BAE46876.1"/>
    <property type="molecule type" value="mRNA"/>
</dbReference>
<dbReference type="CCDS" id="CCDS8382.1"/>
<dbReference type="PIR" id="S64706">
    <property type="entry name" value="S64706"/>
</dbReference>
<dbReference type="RefSeq" id="NP_004707.2">
    <property type="nucleotide sequence ID" value="NM_004716.3"/>
</dbReference>
<dbReference type="SMR" id="Q16549"/>
<dbReference type="BioGRID" id="114604">
    <property type="interactions" value="5"/>
</dbReference>
<dbReference type="FunCoup" id="Q16549">
    <property type="interactions" value="432"/>
</dbReference>
<dbReference type="IntAct" id="Q16549">
    <property type="interactions" value="10"/>
</dbReference>
<dbReference type="MINT" id="Q16549"/>
<dbReference type="STRING" id="9606.ENSP00000325917"/>
<dbReference type="BindingDB" id="Q16549"/>
<dbReference type="ChEMBL" id="CHEMBL2232"/>
<dbReference type="DrugCentral" id="Q16549"/>
<dbReference type="GuidetoPHARMACOLOGY" id="2387"/>
<dbReference type="MEROPS" id="S08.077"/>
<dbReference type="GlyCosmos" id="Q16549">
    <property type="glycosylation" value="4 sites, No reported glycans"/>
</dbReference>
<dbReference type="GlyGen" id="Q16549">
    <property type="glycosylation" value="5 sites, 2 N-linked glycans (3 sites)"/>
</dbReference>
<dbReference type="iPTMnet" id="Q16549"/>
<dbReference type="PhosphoSitePlus" id="Q16549"/>
<dbReference type="SwissPalm" id="Q16549"/>
<dbReference type="BioMuta" id="PCSK7"/>
<dbReference type="DMDM" id="205830663"/>
<dbReference type="jPOST" id="Q16549"/>
<dbReference type="MassIVE" id="Q16549"/>
<dbReference type="PaxDb" id="9606-ENSP00000325917"/>
<dbReference type="PeptideAtlas" id="Q16549"/>
<dbReference type="ProteomicsDB" id="60909"/>
<dbReference type="Antibodypedia" id="32336">
    <property type="antibodies" value="149 antibodies from 22 providers"/>
</dbReference>
<dbReference type="DNASU" id="9159"/>
<dbReference type="Ensembl" id="ENST00000320934.8">
    <property type="protein sequence ID" value="ENSP00000325917.3"/>
    <property type="gene ID" value="ENSG00000160613.15"/>
</dbReference>
<dbReference type="Ensembl" id="ENST00000524507.6">
    <property type="protein sequence ID" value="ENSP00000433841.2"/>
    <property type="gene ID" value="ENSG00000160613.15"/>
</dbReference>
<dbReference type="Ensembl" id="ENST00000676339.1">
    <property type="protein sequence ID" value="ENSP00000501995.1"/>
    <property type="gene ID" value="ENSG00000160613.15"/>
</dbReference>
<dbReference type="GeneID" id="9159"/>
<dbReference type="KEGG" id="hsa:9159"/>
<dbReference type="MANE-Select" id="ENST00000320934.8">
    <property type="protein sequence ID" value="ENSP00000325917.3"/>
    <property type="RefSeq nucleotide sequence ID" value="NM_004716.4"/>
    <property type="RefSeq protein sequence ID" value="NP_004707.2"/>
</dbReference>
<dbReference type="UCSC" id="uc001pqr.4">
    <property type="organism name" value="human"/>
</dbReference>
<dbReference type="AGR" id="HGNC:8748"/>
<dbReference type="CTD" id="9159"/>
<dbReference type="DisGeNET" id="9159"/>
<dbReference type="GeneCards" id="PCSK7"/>
<dbReference type="HGNC" id="HGNC:8748">
    <property type="gene designation" value="PCSK7"/>
</dbReference>
<dbReference type="HPA" id="ENSG00000160613">
    <property type="expression patterns" value="Low tissue specificity"/>
</dbReference>
<dbReference type="MIM" id="604872">
    <property type="type" value="gene"/>
</dbReference>
<dbReference type="neXtProt" id="NX_Q16549"/>
<dbReference type="OpenTargets" id="ENSG00000160613"/>
<dbReference type="PharmGKB" id="PA33094"/>
<dbReference type="VEuPathDB" id="HostDB:ENSG00000160613"/>
<dbReference type="eggNOG" id="KOG3525">
    <property type="taxonomic scope" value="Eukaryota"/>
</dbReference>
<dbReference type="GeneTree" id="ENSGT00940000157676"/>
<dbReference type="InParanoid" id="Q16549"/>
<dbReference type="OMA" id="NGRMPFY"/>
<dbReference type="OrthoDB" id="300641at2759"/>
<dbReference type="PAN-GO" id="Q16549">
    <property type="GO annotations" value="5 GO annotations based on evolutionary models"/>
</dbReference>
<dbReference type="PhylomeDB" id="Q16549"/>
<dbReference type="TreeFam" id="TF314277"/>
<dbReference type="BRENDA" id="3.4.21.B27">
    <property type="organism ID" value="2681"/>
</dbReference>
<dbReference type="PathwayCommons" id="Q16549"/>
<dbReference type="SignaLink" id="Q16549"/>
<dbReference type="SIGNOR" id="Q16549"/>
<dbReference type="BioGRID-ORCS" id="9159">
    <property type="hits" value="29 hits in 1154 CRISPR screens"/>
</dbReference>
<dbReference type="ChiTaRS" id="PCSK7">
    <property type="organism name" value="human"/>
</dbReference>
<dbReference type="GeneWiki" id="PCSK7"/>
<dbReference type="GenomeRNAi" id="9159"/>
<dbReference type="Pharos" id="Q16549">
    <property type="development level" value="Tchem"/>
</dbReference>
<dbReference type="PRO" id="PR:Q16549"/>
<dbReference type="Proteomes" id="UP000005640">
    <property type="component" value="Chromosome 11"/>
</dbReference>
<dbReference type="RNAct" id="Q16549">
    <property type="molecule type" value="protein"/>
</dbReference>
<dbReference type="Bgee" id="ENSG00000160613">
    <property type="expression patterns" value="Expressed in granulocyte and 179 other cell types or tissues"/>
</dbReference>
<dbReference type="ExpressionAtlas" id="Q16549">
    <property type="expression patterns" value="baseline and differential"/>
</dbReference>
<dbReference type="GO" id="GO:0000139">
    <property type="term" value="C:Golgi membrane"/>
    <property type="evidence" value="ECO:0000314"/>
    <property type="project" value="UniProtKB"/>
</dbReference>
<dbReference type="GO" id="GO:0005802">
    <property type="term" value="C:trans-Golgi network"/>
    <property type="evidence" value="ECO:0000318"/>
    <property type="project" value="GO_Central"/>
</dbReference>
<dbReference type="GO" id="GO:0008233">
    <property type="term" value="F:peptidase activity"/>
    <property type="evidence" value="ECO:0000314"/>
    <property type="project" value="MGI"/>
</dbReference>
<dbReference type="GO" id="GO:0004252">
    <property type="term" value="F:serine-type endopeptidase activity"/>
    <property type="evidence" value="ECO:0000318"/>
    <property type="project" value="GO_Central"/>
</dbReference>
<dbReference type="GO" id="GO:0016486">
    <property type="term" value="P:peptide hormone processing"/>
    <property type="evidence" value="ECO:0000303"/>
    <property type="project" value="UniProtKB"/>
</dbReference>
<dbReference type="GO" id="GO:0016485">
    <property type="term" value="P:protein processing"/>
    <property type="evidence" value="ECO:0000314"/>
    <property type="project" value="MGI"/>
</dbReference>
<dbReference type="CDD" id="cd04059">
    <property type="entry name" value="Peptidases_S8_Protein_convertases_Kexins_Furin-like"/>
    <property type="match status" value="1"/>
</dbReference>
<dbReference type="FunFam" id="3.30.70.850:FF:000002">
    <property type="entry name" value="Proprotein convertase subtilisin/kexin type 7"/>
    <property type="match status" value="1"/>
</dbReference>
<dbReference type="FunFam" id="3.40.50.200:FF:000005">
    <property type="entry name" value="Proprotein convertase subtilisin/kexin type 7"/>
    <property type="match status" value="1"/>
</dbReference>
<dbReference type="FunFam" id="2.60.120.260:FF:000026">
    <property type="entry name" value="proprotein convertase subtilisin/kexin type 7"/>
    <property type="match status" value="1"/>
</dbReference>
<dbReference type="Gene3D" id="2.60.120.260">
    <property type="entry name" value="Galactose-binding domain-like"/>
    <property type="match status" value="1"/>
</dbReference>
<dbReference type="Gene3D" id="3.30.70.850">
    <property type="entry name" value="Peptidase S8, pro-domain"/>
    <property type="match status" value="1"/>
</dbReference>
<dbReference type="Gene3D" id="3.40.50.200">
    <property type="entry name" value="Peptidase S8/S53 domain"/>
    <property type="match status" value="1"/>
</dbReference>
<dbReference type="InterPro" id="IPR008979">
    <property type="entry name" value="Galactose-bd-like_sf"/>
</dbReference>
<dbReference type="InterPro" id="IPR034182">
    <property type="entry name" value="Kexin/furin"/>
</dbReference>
<dbReference type="InterPro" id="IPR002884">
    <property type="entry name" value="P_dom"/>
</dbReference>
<dbReference type="InterPro" id="IPR000209">
    <property type="entry name" value="Peptidase_S8/S53_dom"/>
</dbReference>
<dbReference type="InterPro" id="IPR036852">
    <property type="entry name" value="Peptidase_S8/S53_dom_sf"/>
</dbReference>
<dbReference type="InterPro" id="IPR022398">
    <property type="entry name" value="Peptidase_S8_His-AS"/>
</dbReference>
<dbReference type="InterPro" id="IPR023828">
    <property type="entry name" value="Peptidase_S8_Ser-AS"/>
</dbReference>
<dbReference type="InterPro" id="IPR015500">
    <property type="entry name" value="Peptidase_S8_subtilisin-rel"/>
</dbReference>
<dbReference type="InterPro" id="IPR032815">
    <property type="entry name" value="S8_pro-domain"/>
</dbReference>
<dbReference type="InterPro" id="IPR038466">
    <property type="entry name" value="S8_pro-domain_sf"/>
</dbReference>
<dbReference type="PANTHER" id="PTHR42884">
    <property type="entry name" value="PROPROTEIN CONVERTASE SUBTILISIN/KEXIN-RELATED"/>
    <property type="match status" value="1"/>
</dbReference>
<dbReference type="PANTHER" id="PTHR42884:SF28">
    <property type="entry name" value="PROPROTEIN CONVERTASE SUBTILISIN_KEXIN TYPE 7"/>
    <property type="match status" value="1"/>
</dbReference>
<dbReference type="Pfam" id="PF01483">
    <property type="entry name" value="P_proprotein"/>
    <property type="match status" value="1"/>
</dbReference>
<dbReference type="Pfam" id="PF00082">
    <property type="entry name" value="Peptidase_S8"/>
    <property type="match status" value="1"/>
</dbReference>
<dbReference type="Pfam" id="PF16470">
    <property type="entry name" value="S8_pro-domain"/>
    <property type="match status" value="1"/>
</dbReference>
<dbReference type="PRINTS" id="PR00723">
    <property type="entry name" value="SUBTILISIN"/>
</dbReference>
<dbReference type="SUPFAM" id="SSF49785">
    <property type="entry name" value="Galactose-binding domain-like"/>
    <property type="match status" value="1"/>
</dbReference>
<dbReference type="SUPFAM" id="SSF54897">
    <property type="entry name" value="Protease propeptides/inhibitors"/>
    <property type="match status" value="1"/>
</dbReference>
<dbReference type="SUPFAM" id="SSF52743">
    <property type="entry name" value="Subtilisin-like"/>
    <property type="match status" value="1"/>
</dbReference>
<dbReference type="PROSITE" id="PS51829">
    <property type="entry name" value="P_HOMO_B"/>
    <property type="match status" value="1"/>
</dbReference>
<dbReference type="PROSITE" id="PS51892">
    <property type="entry name" value="SUBTILASE"/>
    <property type="match status" value="1"/>
</dbReference>
<dbReference type="PROSITE" id="PS00137">
    <property type="entry name" value="SUBTILASE_HIS"/>
    <property type="match status" value="1"/>
</dbReference>
<dbReference type="PROSITE" id="PS00138">
    <property type="entry name" value="SUBTILASE_SER"/>
    <property type="match status" value="1"/>
</dbReference>
<proteinExistence type="evidence at protein level"/>
<accession>Q16549</accession>
<accession>B0YJ60</accession>
<accession>Q3C1X1</accession>
<accession>Q53GM4</accession>
<accession>Q96FK8</accession>
<accession>Q9UL57</accession>
<reference key="1">
    <citation type="journal article" date="1996" name="Biochem. J.">
        <title>PC8, a new member of the convertase family.</title>
        <authorList>
            <person name="Bruzzaniti A."/>
            <person name="Goodge K."/>
            <person name="Jay P."/>
            <person name="Taviaux S.A."/>
            <person name="Lam M.H.C."/>
            <person name="Berta P."/>
            <person name="Martin T.J."/>
            <person name="Moseley J.M."/>
            <person name="Gillespie M.T."/>
        </authorList>
    </citation>
    <scope>NUCLEOTIDE SEQUENCE [MRNA]</scope>
    <source>
        <tissue>Lung carcinoma</tissue>
    </source>
</reference>
<reference key="2">
    <citation type="journal article" date="1996" name="Biochem. J.">
        <authorList>
            <person name="Bruzzaniti A."/>
            <person name="Goodge K."/>
            <person name="Jay P."/>
            <person name="Taviaux S.A."/>
            <person name="Lam M.H.C."/>
            <person name="Berta P."/>
            <person name="Martin T.J."/>
            <person name="Moseley J.M."/>
            <person name="Gillespie M.T."/>
        </authorList>
    </citation>
    <scope>ERRATUM OF PUBMED:8615762</scope>
</reference>
<reference key="3">
    <citation type="journal article" date="1996" name="Cancer Res.">
        <title>A new member of the proprotein convertase gene family (LPC) is located at a chromosome translocation breakpoint in lymphomas.</title>
        <authorList>
            <person name="Meerabux J."/>
            <person name="Yaspo M.-L."/>
            <person name="Roebroek A.J.M."/>
            <person name="Van de Ven W.J.M."/>
            <person name="Lister T.A."/>
            <person name="Young B.D."/>
        </authorList>
    </citation>
    <scope>NUCLEOTIDE SEQUENCE [MRNA]</scope>
    <source>
        <tissue>T-cell lymphoma</tissue>
    </source>
</reference>
<reference key="4">
    <citation type="submission" date="2003-05" db="EMBL/GenBank/DDBJ databases">
        <title>Cloning of human full-length CDSs in BD Creator(TM) system donor vector.</title>
        <authorList>
            <person name="Kalnine N."/>
            <person name="Chen X."/>
            <person name="Rolfs A."/>
            <person name="Halleck A."/>
            <person name="Hines L."/>
            <person name="Eisenstein S."/>
            <person name="Koundinya M."/>
            <person name="Raphael J."/>
            <person name="Moreira D."/>
            <person name="Kelley T."/>
            <person name="LaBaer J."/>
            <person name="Lin Y."/>
            <person name="Phelan M."/>
            <person name="Farmer A."/>
        </authorList>
    </citation>
    <scope>NUCLEOTIDE SEQUENCE [LARGE SCALE MRNA]</scope>
</reference>
<reference key="5">
    <citation type="journal article" date="2004" name="Nat. Genet.">
        <title>Complete sequencing and characterization of 21,243 full-length human cDNAs.</title>
        <authorList>
            <person name="Ota T."/>
            <person name="Suzuki Y."/>
            <person name="Nishikawa T."/>
            <person name="Otsuki T."/>
            <person name="Sugiyama T."/>
            <person name="Irie R."/>
            <person name="Wakamatsu A."/>
            <person name="Hayashi K."/>
            <person name="Sato H."/>
            <person name="Nagai K."/>
            <person name="Kimura K."/>
            <person name="Makita H."/>
            <person name="Sekine M."/>
            <person name="Obayashi M."/>
            <person name="Nishi T."/>
            <person name="Shibahara T."/>
            <person name="Tanaka T."/>
            <person name="Ishii S."/>
            <person name="Yamamoto J."/>
            <person name="Saito K."/>
            <person name="Kawai Y."/>
            <person name="Isono Y."/>
            <person name="Nakamura Y."/>
            <person name="Nagahari K."/>
            <person name="Murakami K."/>
            <person name="Yasuda T."/>
            <person name="Iwayanagi T."/>
            <person name="Wagatsuma M."/>
            <person name="Shiratori A."/>
            <person name="Sudo H."/>
            <person name="Hosoiri T."/>
            <person name="Kaku Y."/>
            <person name="Kodaira H."/>
            <person name="Kondo H."/>
            <person name="Sugawara M."/>
            <person name="Takahashi M."/>
            <person name="Kanda K."/>
            <person name="Yokoi T."/>
            <person name="Furuya T."/>
            <person name="Kikkawa E."/>
            <person name="Omura Y."/>
            <person name="Abe K."/>
            <person name="Kamihara K."/>
            <person name="Katsuta N."/>
            <person name="Sato K."/>
            <person name="Tanikawa M."/>
            <person name="Yamazaki M."/>
            <person name="Ninomiya K."/>
            <person name="Ishibashi T."/>
            <person name="Yamashita H."/>
            <person name="Murakawa K."/>
            <person name="Fujimori K."/>
            <person name="Tanai H."/>
            <person name="Kimata M."/>
            <person name="Watanabe M."/>
            <person name="Hiraoka S."/>
            <person name="Chiba Y."/>
            <person name="Ishida S."/>
            <person name="Ono Y."/>
            <person name="Takiguchi S."/>
            <person name="Watanabe S."/>
            <person name="Yosida M."/>
            <person name="Hotuta T."/>
            <person name="Kusano J."/>
            <person name="Kanehori K."/>
            <person name="Takahashi-Fujii A."/>
            <person name="Hara H."/>
            <person name="Tanase T.-O."/>
            <person name="Nomura Y."/>
            <person name="Togiya S."/>
            <person name="Komai F."/>
            <person name="Hara R."/>
            <person name="Takeuchi K."/>
            <person name="Arita M."/>
            <person name="Imose N."/>
            <person name="Musashino K."/>
            <person name="Yuuki H."/>
            <person name="Oshima A."/>
            <person name="Sasaki N."/>
            <person name="Aotsuka S."/>
            <person name="Yoshikawa Y."/>
            <person name="Matsunawa H."/>
            <person name="Ichihara T."/>
            <person name="Shiohata N."/>
            <person name="Sano S."/>
            <person name="Moriya S."/>
            <person name="Momiyama H."/>
            <person name="Satoh N."/>
            <person name="Takami S."/>
            <person name="Terashima Y."/>
            <person name="Suzuki O."/>
            <person name="Nakagawa S."/>
            <person name="Senoh A."/>
            <person name="Mizoguchi H."/>
            <person name="Goto Y."/>
            <person name="Shimizu F."/>
            <person name="Wakebe H."/>
            <person name="Hishigaki H."/>
            <person name="Watanabe T."/>
            <person name="Sugiyama A."/>
            <person name="Takemoto M."/>
            <person name="Kawakami B."/>
            <person name="Yamazaki M."/>
            <person name="Watanabe K."/>
            <person name="Kumagai A."/>
            <person name="Itakura S."/>
            <person name="Fukuzumi Y."/>
            <person name="Fujimori Y."/>
            <person name="Komiyama M."/>
            <person name="Tashiro H."/>
            <person name="Tanigami A."/>
            <person name="Fujiwara T."/>
            <person name="Ono T."/>
            <person name="Yamada K."/>
            <person name="Fujii Y."/>
            <person name="Ozaki K."/>
            <person name="Hirao M."/>
            <person name="Ohmori Y."/>
            <person name="Kawabata A."/>
            <person name="Hikiji T."/>
            <person name="Kobatake N."/>
            <person name="Inagaki H."/>
            <person name="Ikema Y."/>
            <person name="Okamoto S."/>
            <person name="Okitani R."/>
            <person name="Kawakami T."/>
            <person name="Noguchi S."/>
            <person name="Itoh T."/>
            <person name="Shigeta K."/>
            <person name="Senba T."/>
            <person name="Matsumura K."/>
            <person name="Nakajima Y."/>
            <person name="Mizuno T."/>
            <person name="Morinaga M."/>
            <person name="Sasaki M."/>
            <person name="Togashi T."/>
            <person name="Oyama M."/>
            <person name="Hata H."/>
            <person name="Watanabe M."/>
            <person name="Komatsu T."/>
            <person name="Mizushima-Sugano J."/>
            <person name="Satoh T."/>
            <person name="Shirai Y."/>
            <person name="Takahashi Y."/>
            <person name="Nakagawa K."/>
            <person name="Okumura K."/>
            <person name="Nagase T."/>
            <person name="Nomura N."/>
            <person name="Kikuchi H."/>
            <person name="Masuho Y."/>
            <person name="Yamashita R."/>
            <person name="Nakai K."/>
            <person name="Yada T."/>
            <person name="Nakamura Y."/>
            <person name="Ohara O."/>
            <person name="Isogai T."/>
            <person name="Sugano S."/>
        </authorList>
    </citation>
    <scope>NUCLEOTIDE SEQUENCE [LARGE SCALE MRNA]</scope>
</reference>
<reference key="6">
    <citation type="submission" date="2005-04" db="EMBL/GenBank/DDBJ databases">
        <authorList>
            <person name="Suzuki Y."/>
            <person name="Sugano S."/>
            <person name="Totoki Y."/>
            <person name="Toyoda A."/>
            <person name="Takeda T."/>
            <person name="Sakaki Y."/>
            <person name="Tanaka A."/>
            <person name="Yokoyama S."/>
        </authorList>
    </citation>
    <scope>NUCLEOTIDE SEQUENCE [LARGE SCALE MRNA]</scope>
    <source>
        <tissue>Kidney</tissue>
    </source>
</reference>
<reference key="7">
    <citation type="submission" date="2007-02" db="EMBL/GenBank/DDBJ databases">
        <authorList>
            <consortium name="NHLBI resequencing and genotyping service (RS&amp;G)"/>
        </authorList>
    </citation>
    <scope>NUCLEOTIDE SEQUENCE [GENOMIC DNA]</scope>
</reference>
<reference key="8">
    <citation type="submission" date="2005-07" db="EMBL/GenBank/DDBJ databases">
        <authorList>
            <person name="Mural R.J."/>
            <person name="Istrail S."/>
            <person name="Sutton G.G."/>
            <person name="Florea L."/>
            <person name="Halpern A.L."/>
            <person name="Mobarry C.M."/>
            <person name="Lippert R."/>
            <person name="Walenz B."/>
            <person name="Shatkay H."/>
            <person name="Dew I."/>
            <person name="Miller J.R."/>
            <person name="Flanigan M.J."/>
            <person name="Edwards N.J."/>
            <person name="Bolanos R."/>
            <person name="Fasulo D."/>
            <person name="Halldorsson B.V."/>
            <person name="Hannenhalli S."/>
            <person name="Turner R."/>
            <person name="Yooseph S."/>
            <person name="Lu F."/>
            <person name="Nusskern D.R."/>
            <person name="Shue B.C."/>
            <person name="Zheng X.H."/>
            <person name="Zhong F."/>
            <person name="Delcher A.L."/>
            <person name="Huson D.H."/>
            <person name="Kravitz S.A."/>
            <person name="Mouchard L."/>
            <person name="Reinert K."/>
            <person name="Remington K.A."/>
            <person name="Clark A.G."/>
            <person name="Waterman M.S."/>
            <person name="Eichler E.E."/>
            <person name="Adams M.D."/>
            <person name="Hunkapiller M.W."/>
            <person name="Myers E.W."/>
            <person name="Venter J.C."/>
        </authorList>
    </citation>
    <scope>NUCLEOTIDE SEQUENCE [LARGE SCALE GENOMIC DNA]</scope>
</reference>
<reference key="9">
    <citation type="journal article" date="2004" name="Genome Res.">
        <title>The status, quality, and expansion of the NIH full-length cDNA project: the Mammalian Gene Collection (MGC).</title>
        <authorList>
            <consortium name="The MGC Project Team"/>
        </authorList>
    </citation>
    <scope>NUCLEOTIDE SEQUENCE [LARGE SCALE MRNA]</scope>
    <source>
        <tissue>Eye</tissue>
    </source>
</reference>
<reference key="10">
    <citation type="journal article" date="1999" name="Oncogene">
        <title>Molecular analysis of an unstable genomic region at chromosome band 11q23 reveals a disruption of the gene encoding the alpha2 subunit of platelet-activating factor acetylhydrolase (Pafah1a2) in human lymphoma.</title>
        <authorList>
            <person name="Lecointe N."/>
            <person name="Meerabux J."/>
            <person name="Ebihara M."/>
            <person name="Hill A."/>
            <person name="Young B.D."/>
        </authorList>
    </citation>
    <scope>NUCLEOTIDE SEQUENCE [GENOMIC DNA] OF 527-785</scope>
</reference>
<reference key="11">
    <citation type="submission" date="2005-08" db="EMBL/GenBank/DDBJ databases">
        <title>Identification of novel human genes predicted by combining multiple gene-finders.</title>
        <authorList>
            <person name="Totoki Y."/>
            <person name="Yada T."/>
            <person name="Sakaki Y."/>
            <person name="Takeda T."/>
        </authorList>
    </citation>
    <scope>NUCLEOTIDE SEQUENCE [MRNA] OF 574-655</scope>
</reference>
<reference key="12">
    <citation type="journal article" date="1997" name="J. Biol. Chem.">
        <title>Biosynthesis, distinct post-translational modifications, and functional characterization of lymphoma proprotein convertase.</title>
        <authorList>
            <person name="Van de Loo J.-W.H.P."/>
            <person name="Creemers J.W.M."/>
            <person name="Bright N.A."/>
            <person name="Young B.D."/>
            <person name="Roebroek A.J.M."/>
            <person name="Van de Ven W.J.M."/>
        </authorList>
    </citation>
    <scope>GLYCOSYLATION</scope>
    <scope>PALMITOYLATION</scope>
</reference>
<organism>
    <name type="scientific">Homo sapiens</name>
    <name type="common">Human</name>
    <dbReference type="NCBI Taxonomy" id="9606"/>
    <lineage>
        <taxon>Eukaryota</taxon>
        <taxon>Metazoa</taxon>
        <taxon>Chordata</taxon>
        <taxon>Craniata</taxon>
        <taxon>Vertebrata</taxon>
        <taxon>Euteleostomi</taxon>
        <taxon>Mammalia</taxon>
        <taxon>Eutheria</taxon>
        <taxon>Euarchontoglires</taxon>
        <taxon>Primates</taxon>
        <taxon>Haplorrhini</taxon>
        <taxon>Catarrhini</taxon>
        <taxon>Hominidae</taxon>
        <taxon>Homo</taxon>
    </lineage>
</organism>
<keyword id="KW-0165">Cleavage on pair of basic residues</keyword>
<keyword id="KW-0325">Glycoprotein</keyword>
<keyword id="KW-0333">Golgi apparatus</keyword>
<keyword id="KW-0378">Hydrolase</keyword>
<keyword id="KW-0449">Lipoprotein</keyword>
<keyword id="KW-0472">Membrane</keyword>
<keyword id="KW-0564">Palmitate</keyword>
<keyword id="KW-0645">Protease</keyword>
<keyword id="KW-1267">Proteomics identification</keyword>
<keyword id="KW-1185">Reference proteome</keyword>
<keyword id="KW-0720">Serine protease</keyword>
<keyword id="KW-0732">Signal</keyword>
<keyword id="KW-0812">Transmembrane</keyword>
<keyword id="KW-1133">Transmembrane helix</keyword>
<keyword id="KW-0865">Zymogen</keyword>
<sequence>MPKGRQKVPHLDAPLGLPTCLWLELAGLFLLVPWVMGLAGTGGPDGQGTGGPSWAVHLESLEGDGEEETLEQQADALAQAAGLVNAGRIGELQGHYLFVQPAGHRPALEVEAIRQQVEAVLAGHEAVRWHSEQRLLRRAKRSVHFNDPKYPQQWHLNNRRSPGRDINVTGVWERNVTGRGVTVVVVDDGVEHTIQDIAPNYSPEGSYDLNSNDPDPMPHPDVENGNHHGTRCAGEIAAVPNNSFCAVGVAYGSRIAGIRVLDGPLTDSMEAVAFNKHYQINDIYSCSWGPDDDGKTVDGPHQLGKAALQHGVIAGRQGFGSIFVVASGNGGQHNDNCNYDGYANSIYTVTIGAVDEEGRMPFYAEECASMLAVTFSGGDKMLRSIVTTDWDLQKGTGCTEGHTGTSAAAPLAAGMIALMLQVRPCLTWRDVQHIIVFTATRYEDRRAEWVTNEAGFSHSHQHGFGLLNAWRLVNAAKIWTSVPYLASYVSPVLKENKAIPQSPRSLEVLWNVSRMDLEMSGLKTLEHVAVTVSITHPRRGSLELKLFCPSGMMSLIGAPRSMDSDPNGFNDWTFSTVRCWGERARGTYRLVIRDVGDESFQVGILRQWQLTLYGSVWSAVDIRDRQRLLESAMSGKYLHDDFALPCPPGLKIPEEDGYTITPNTLKTLVLVGCFTVFWTVYYMLEVYLSQRNVASNQVCRSGPCHWPHRSRKAKEEGTELESVPLCSSKDPDEVETESRGPPTTSDLLAPDLLEQGDWSLSQNKSALDCPHQHLDVPHGKEEQIC</sequence>
<gene>
    <name type="primary">PCSK7</name>
    <name type="synonym">LPC</name>
    <name type="synonym">PC7</name>
    <name type="synonym">PC8</name>
    <name type="synonym">SPC7</name>
</gene>